<name>FLIW_EXISA</name>
<reference key="1">
    <citation type="journal article" date="2011" name="J. Bacteriol.">
        <title>Complete genome sequence of the Thermophilic Bacterium Exiguobacterium sp. AT1b.</title>
        <authorList>
            <person name="Vishnivetskaya T.A."/>
            <person name="Lucas S."/>
            <person name="Copeland A."/>
            <person name="Lapidus A."/>
            <person name="Glavina del Rio T."/>
            <person name="Dalin E."/>
            <person name="Tice H."/>
            <person name="Bruce D.C."/>
            <person name="Goodwin L.A."/>
            <person name="Pitluck S."/>
            <person name="Saunders E."/>
            <person name="Brettin T."/>
            <person name="Detter C."/>
            <person name="Han C."/>
            <person name="Larimer F."/>
            <person name="Land M.L."/>
            <person name="Hauser L.J."/>
            <person name="Kyrpides N.C."/>
            <person name="Ovchinnikova G."/>
            <person name="Kathariou S."/>
            <person name="Ramaley R.F."/>
            <person name="Rodrigues D.F."/>
            <person name="Hendrix C."/>
            <person name="Richardson P."/>
            <person name="Tiedje J.M."/>
        </authorList>
    </citation>
    <scope>NUCLEOTIDE SEQUENCE [LARGE SCALE GENOMIC DNA]</scope>
    <source>
        <strain>ATCC BAA-1283 / AT1b</strain>
    </source>
</reference>
<gene>
    <name evidence="1" type="primary">fliW</name>
    <name type="ordered locus">EAT1b_0929</name>
</gene>
<feature type="chain" id="PRO_1000213776" description="Flagellar assembly factor FliW">
    <location>
        <begin position="1"/>
        <end position="145"/>
    </location>
</feature>
<proteinExistence type="inferred from homology"/>
<dbReference type="EMBL" id="CP001615">
    <property type="protein sequence ID" value="ACQ69858.1"/>
    <property type="molecule type" value="Genomic_DNA"/>
</dbReference>
<dbReference type="RefSeq" id="WP_012726977.1">
    <property type="nucleotide sequence ID" value="NC_012673.1"/>
</dbReference>
<dbReference type="SMR" id="C4L5P3"/>
<dbReference type="STRING" id="360911.EAT1b_0929"/>
<dbReference type="KEGG" id="eat:EAT1b_0929"/>
<dbReference type="eggNOG" id="COG1699">
    <property type="taxonomic scope" value="Bacteria"/>
</dbReference>
<dbReference type="HOGENOM" id="CLU_112356_0_2_9"/>
<dbReference type="OrthoDB" id="9801235at2"/>
<dbReference type="Proteomes" id="UP000000716">
    <property type="component" value="Chromosome"/>
</dbReference>
<dbReference type="GO" id="GO:0005737">
    <property type="term" value="C:cytoplasm"/>
    <property type="evidence" value="ECO:0007669"/>
    <property type="project" value="UniProtKB-SubCell"/>
</dbReference>
<dbReference type="GO" id="GO:0044780">
    <property type="term" value="P:bacterial-type flagellum assembly"/>
    <property type="evidence" value="ECO:0007669"/>
    <property type="project" value="UniProtKB-UniRule"/>
</dbReference>
<dbReference type="GO" id="GO:0006417">
    <property type="term" value="P:regulation of translation"/>
    <property type="evidence" value="ECO:0007669"/>
    <property type="project" value="UniProtKB-KW"/>
</dbReference>
<dbReference type="Gene3D" id="2.30.290.10">
    <property type="entry name" value="BH3618-like"/>
    <property type="match status" value="1"/>
</dbReference>
<dbReference type="HAMAP" id="MF_01185">
    <property type="entry name" value="FliW"/>
    <property type="match status" value="1"/>
</dbReference>
<dbReference type="InterPro" id="IPR003775">
    <property type="entry name" value="Flagellar_assembly_factor_FliW"/>
</dbReference>
<dbReference type="InterPro" id="IPR024046">
    <property type="entry name" value="Flagellar_assmbl_FliW_dom_sf"/>
</dbReference>
<dbReference type="PANTHER" id="PTHR39190">
    <property type="entry name" value="FLAGELLAR ASSEMBLY FACTOR FLIW"/>
    <property type="match status" value="1"/>
</dbReference>
<dbReference type="PANTHER" id="PTHR39190:SF1">
    <property type="entry name" value="FLAGELLAR ASSEMBLY FACTOR FLIW"/>
    <property type="match status" value="1"/>
</dbReference>
<dbReference type="Pfam" id="PF02623">
    <property type="entry name" value="FliW"/>
    <property type="match status" value="1"/>
</dbReference>
<dbReference type="SUPFAM" id="SSF141457">
    <property type="entry name" value="BH3618-like"/>
    <property type="match status" value="1"/>
</dbReference>
<sequence>MFIETDYFGKIEINEAETITFVSEIPGFPDSKTFVLIPYGEDLPFWSLQSIEEQACAFVVTNPFWHKSDYAFELSDGAKDQLGIEEAEHVSVYSIVTLREPFESSTLNLKAPIVIETKERRGKQVILDDAYPARYPLGGTKAEVR</sequence>
<protein>
    <recommendedName>
        <fullName evidence="1">Flagellar assembly factor FliW</fullName>
    </recommendedName>
</protein>
<comment type="function">
    <text evidence="1">Acts as an anti-CsrA protein, binds CsrA and prevents it from repressing translation of its target genes, one of which is flagellin. Binds to flagellin and participates in the assembly of the flagellum.</text>
</comment>
<comment type="subunit">
    <text evidence="1">Interacts with translational regulator CsrA and flagellin(s).</text>
</comment>
<comment type="subcellular location">
    <subcellularLocation>
        <location evidence="1">Cytoplasm</location>
    </subcellularLocation>
</comment>
<comment type="similarity">
    <text evidence="1">Belongs to the FliW family.</text>
</comment>
<organism>
    <name type="scientific">Exiguobacterium sp. (strain ATCC BAA-1283 / AT1b)</name>
    <dbReference type="NCBI Taxonomy" id="360911"/>
    <lineage>
        <taxon>Bacteria</taxon>
        <taxon>Bacillati</taxon>
        <taxon>Bacillota</taxon>
        <taxon>Bacilli</taxon>
        <taxon>Bacillales</taxon>
        <taxon>Bacillales Family XII. Incertae Sedis</taxon>
        <taxon>Exiguobacterium</taxon>
    </lineage>
</organism>
<accession>C4L5P3</accession>
<evidence type="ECO:0000255" key="1">
    <source>
        <dbReference type="HAMAP-Rule" id="MF_01185"/>
    </source>
</evidence>
<keyword id="KW-1005">Bacterial flagellum biogenesis</keyword>
<keyword id="KW-0143">Chaperone</keyword>
<keyword id="KW-0963">Cytoplasm</keyword>
<keyword id="KW-0810">Translation regulation</keyword>